<accession>D3UEQ8</accession>
<keyword id="KW-0004">4Fe-4S</keyword>
<keyword id="KW-0238">DNA-binding</keyword>
<keyword id="KW-0269">Exonuclease</keyword>
<keyword id="KW-0378">Hydrolase</keyword>
<keyword id="KW-0408">Iron</keyword>
<keyword id="KW-0411">Iron-sulfur</keyword>
<keyword id="KW-0460">Magnesium</keyword>
<keyword id="KW-0479">Metal-binding</keyword>
<keyword id="KW-0496">Mitochondrion</keyword>
<keyword id="KW-0540">Nuclease</keyword>
<keyword id="KW-0809">Transit peptide</keyword>
<evidence type="ECO:0000250" key="1"/>
<evidence type="ECO:0000255" key="2"/>
<evidence type="ECO:0000305" key="3"/>
<dbReference type="EC" id="3.1.-.-"/>
<dbReference type="EMBL" id="FN393060">
    <property type="protein sequence ID" value="CBK39238.1"/>
    <property type="molecule type" value="Genomic_DNA"/>
</dbReference>
<dbReference type="HOGENOM" id="CLU_019985_0_0_1"/>
<dbReference type="OrthoDB" id="41432at4893"/>
<dbReference type="Proteomes" id="UP000000286">
    <property type="component" value="Chromosome II, Scaffold EC1118_1B15"/>
</dbReference>
<dbReference type="GO" id="GO:0005739">
    <property type="term" value="C:mitochondrion"/>
    <property type="evidence" value="ECO:0007669"/>
    <property type="project" value="UniProtKB-SubCell"/>
</dbReference>
<dbReference type="GO" id="GO:0005634">
    <property type="term" value="C:nucleus"/>
    <property type="evidence" value="ECO:0007669"/>
    <property type="project" value="TreeGrafter"/>
</dbReference>
<dbReference type="GO" id="GO:0051539">
    <property type="term" value="F:4 iron, 4 sulfur cluster binding"/>
    <property type="evidence" value="ECO:0007669"/>
    <property type="project" value="UniProtKB-KW"/>
</dbReference>
<dbReference type="GO" id="GO:0003677">
    <property type="term" value="F:DNA binding"/>
    <property type="evidence" value="ECO:0007669"/>
    <property type="project" value="UniProtKB-KW"/>
</dbReference>
<dbReference type="GO" id="GO:0046872">
    <property type="term" value="F:metal ion binding"/>
    <property type="evidence" value="ECO:0007669"/>
    <property type="project" value="UniProtKB-KW"/>
</dbReference>
<dbReference type="GO" id="GO:0045145">
    <property type="term" value="F:single-stranded DNA 5'-3' DNA exonuclease activity"/>
    <property type="evidence" value="ECO:0007669"/>
    <property type="project" value="InterPro"/>
</dbReference>
<dbReference type="GO" id="GO:0036297">
    <property type="term" value="P:interstrand cross-link repair"/>
    <property type="evidence" value="ECO:0007669"/>
    <property type="project" value="TreeGrafter"/>
</dbReference>
<dbReference type="GO" id="GO:0000002">
    <property type="term" value="P:mitochondrial genome maintenance"/>
    <property type="evidence" value="ECO:0007669"/>
    <property type="project" value="InterPro"/>
</dbReference>
<dbReference type="InterPro" id="IPR016610">
    <property type="entry name" value="Exo5"/>
</dbReference>
<dbReference type="InterPro" id="IPR019190">
    <property type="entry name" value="EXOV"/>
</dbReference>
<dbReference type="PANTHER" id="PTHR14464">
    <property type="entry name" value="EXONUCLEASE V"/>
    <property type="match status" value="1"/>
</dbReference>
<dbReference type="PANTHER" id="PTHR14464:SF4">
    <property type="entry name" value="EXONUCLEASE V"/>
    <property type="match status" value="1"/>
</dbReference>
<dbReference type="Pfam" id="PF09810">
    <property type="entry name" value="Exo5"/>
    <property type="match status" value="1"/>
</dbReference>
<dbReference type="PIRSF" id="PIRSF013220">
    <property type="entry name" value="UCP013220"/>
    <property type="match status" value="1"/>
</dbReference>
<organism>
    <name type="scientific">Saccharomyces cerevisiae (strain Lalvin EC1118 / Prise de mousse)</name>
    <name type="common">Baker's yeast</name>
    <dbReference type="NCBI Taxonomy" id="643680"/>
    <lineage>
        <taxon>Eukaryota</taxon>
        <taxon>Fungi</taxon>
        <taxon>Dikarya</taxon>
        <taxon>Ascomycota</taxon>
        <taxon>Saccharomycotina</taxon>
        <taxon>Saccharomycetes</taxon>
        <taxon>Saccharomycetales</taxon>
        <taxon>Saccharomycetaceae</taxon>
        <taxon>Saccharomyces</taxon>
    </lineage>
</organism>
<feature type="transit peptide" description="Mitochondrion" evidence="2">
    <location>
        <begin position="1"/>
        <end position="26"/>
    </location>
</feature>
<feature type="chain" id="PRO_0000406695" description="Exonuclease V, mitochondrial">
    <location>
        <begin position="27"/>
        <end position="585"/>
    </location>
</feature>
<feature type="binding site" evidence="1">
    <location>
        <position position="141"/>
    </location>
    <ligand>
        <name>[4Fe-4S] cluster</name>
        <dbReference type="ChEBI" id="CHEBI:49883"/>
    </ligand>
</feature>
<feature type="binding site" evidence="1">
    <location>
        <position position="549"/>
    </location>
    <ligand>
        <name>[4Fe-4S] cluster</name>
        <dbReference type="ChEBI" id="CHEBI:49883"/>
    </ligand>
</feature>
<feature type="binding site" evidence="1">
    <location>
        <position position="552"/>
    </location>
    <ligand>
        <name>[4Fe-4S] cluster</name>
        <dbReference type="ChEBI" id="CHEBI:49883"/>
    </ligand>
</feature>
<feature type="binding site" evidence="1">
    <location>
        <position position="558"/>
    </location>
    <ligand>
        <name>[4Fe-4S] cluster</name>
        <dbReference type="ChEBI" id="CHEBI:49883"/>
    </ligand>
</feature>
<comment type="function">
    <text evidence="1">Single strand DNA specific 5' exonuclease involved in mitochondrial DNA replication and recombination. Releases dinucleotides as main products of catalysis. Has the capacity to slide across 5'double-stranded DNA or 5'RNA sequences and resumes cutting two nucleotides downstream of the double-stranded-to-single-stranded junction or RNA-to-DNA junction, respectively (By similarity).</text>
</comment>
<comment type="cofactor">
    <cofactor evidence="1">
        <name>Mg(2+)</name>
        <dbReference type="ChEBI" id="CHEBI:18420"/>
    </cofactor>
</comment>
<comment type="cofactor">
    <cofactor evidence="1">
        <name>[4Fe-4S] cluster</name>
        <dbReference type="ChEBI" id="CHEBI:49883"/>
    </cofactor>
    <text evidence="1">Binds 1 [4Fe-4S] cluster.</text>
</comment>
<comment type="subunit">
    <text evidence="1">Monomer.</text>
</comment>
<comment type="subcellular location">
    <subcellularLocation>
        <location evidence="1">Mitochondrion</location>
    </subcellularLocation>
</comment>
<comment type="similarity">
    <text evidence="3">Belongs to the EXO5 family.</text>
</comment>
<protein>
    <recommendedName>
        <fullName>Exonuclease V, mitochondrial</fullName>
        <shortName>Exo V</shortName>
        <ecNumber>3.1.-.-</ecNumber>
    </recommendedName>
    <alternativeName>
        <fullName>Defects in morphology protein 1</fullName>
    </alternativeName>
</protein>
<sequence>MLGRTLINKHGFLIHPRRFVHLNDKSLDGTFILPSKKNHMYDVPTNDLSGILNASDIDRINNLPFFDNTSPTKETNTKEGALLSEKLASVKELFGEDLENPSFINYRFPRGLENPYFDIQVNQLKKKRLSVTQLCTTQNWCELRNFYDFYSQNLSNQLLNLKFQVQKGKKIHKSLEDETHPELNQYKSFTHNFLALTKLSMDIDNDMDALLDNWFNSINRLVSLFTKGDGHAREIVCHGFINLEDGKLVEHLLNSDSKTKENVIISGVIDHLTLRNKHNHQVQKGAAHLDTEYQSWGNILTNLLSNLKELKSNNEIVISDIKTRSVPKIPSIESVIESSKLQTMYYKFFFSHLSQDMTQTYHSFLINAKRRGLDVDAPINPTKILTFILTNPLFANDVKNLLYGLPINHSAFDNDAKGSNTFDMAAFNDLLDRGPTSFNVPIEQDEDSSESTKCVSLRDYGHFYTKWKTPLTLKYFAARLSQIYFIVGNLVSNDLMIEYYYHNDNFHNIIFPYDTLKLGTHAHDSAMVWFGGRDMHPIEPTQKNFNTYCKFCDYRHVCSWKNKNELKLIDLGKELKKIILESSMK</sequence>
<proteinExistence type="inferred from homology"/>
<name>EXO5_YEAS8</name>
<reference key="1">
    <citation type="journal article" date="2009" name="Proc. Natl. Acad. Sci. U.S.A.">
        <title>Eukaryote-to-eukaryote gene transfer events revealed by the genome sequence of the wine yeast Saccharomyces cerevisiae EC1118.</title>
        <authorList>
            <person name="Novo M."/>
            <person name="Bigey F."/>
            <person name="Beyne E."/>
            <person name="Galeote V."/>
            <person name="Gavory F."/>
            <person name="Mallet S."/>
            <person name="Cambon B."/>
            <person name="Legras J.-L."/>
            <person name="Wincker P."/>
            <person name="Casaregola S."/>
            <person name="Dequin S."/>
        </authorList>
    </citation>
    <scope>NUCLEOTIDE SEQUENCE [LARGE SCALE GENOMIC DNA]</scope>
    <source>
        <strain>Lalvin EC1118 / Prise de mousse</strain>
    </source>
</reference>
<gene>
    <name type="primary">EXO5</name>
    <name type="synonym">DEM1</name>
    <name type="ORF">EC1118_1B15_3235g</name>
</gene>